<sequence length="63" mass="6462">MDPQDCTCAAGDSCSCAGSCKCKNCRCRSCRKSCCSCCPAGCNNCAKGCVCKEPASSKCSCCH</sequence>
<feature type="chain" id="PRO_0000197258" description="Metallothionein">
    <location>
        <begin position="1"/>
        <end position="63"/>
    </location>
</feature>
<feature type="region of interest" description="Beta">
    <location>
        <begin position="1"/>
        <end position="30"/>
    </location>
</feature>
<feature type="region of interest" description="Alpha">
    <location>
        <begin position="31"/>
        <end position="63"/>
    </location>
</feature>
<feature type="binding site" evidence="1">
    <location>
        <position position="6"/>
    </location>
    <ligand>
        <name>a divalent metal cation</name>
        <dbReference type="ChEBI" id="CHEBI:60240"/>
        <label>1</label>
        <note>in cluster B</note>
    </ligand>
</feature>
<feature type="binding site" evidence="1">
    <location>
        <position position="8"/>
    </location>
    <ligand>
        <name>a divalent metal cation</name>
        <dbReference type="ChEBI" id="CHEBI:60240"/>
        <label>1</label>
        <note>in cluster B</note>
    </ligand>
</feature>
<feature type="binding site" evidence="1">
    <location>
        <position position="8"/>
    </location>
    <ligand>
        <name>a divalent metal cation</name>
        <dbReference type="ChEBI" id="CHEBI:60240"/>
        <label>2</label>
        <note>in cluster B</note>
    </ligand>
</feature>
<feature type="binding site" evidence="1">
    <location>
        <position position="14"/>
    </location>
    <ligand>
        <name>a divalent metal cation</name>
        <dbReference type="ChEBI" id="CHEBI:60240"/>
        <label>2</label>
        <note>in cluster B</note>
    </ligand>
</feature>
<feature type="binding site" evidence="1">
    <location>
        <position position="16"/>
    </location>
    <ligand>
        <name>a divalent metal cation</name>
        <dbReference type="ChEBI" id="CHEBI:60240"/>
        <label>2</label>
        <note>in cluster B</note>
    </ligand>
</feature>
<feature type="binding site" evidence="1">
    <location>
        <position position="16"/>
    </location>
    <ligand>
        <name>a divalent metal cation</name>
        <dbReference type="ChEBI" id="CHEBI:60240"/>
        <label>3</label>
        <note>in cluster B</note>
    </ligand>
</feature>
<feature type="binding site" evidence="1">
    <location>
        <position position="20"/>
    </location>
    <ligand>
        <name>a divalent metal cation</name>
        <dbReference type="ChEBI" id="CHEBI:60240"/>
        <label>3</label>
        <note>in cluster B</note>
    </ligand>
</feature>
<feature type="binding site" evidence="1">
    <location>
        <position position="22"/>
    </location>
    <ligand>
        <name>a divalent metal cation</name>
        <dbReference type="ChEBI" id="CHEBI:60240"/>
        <label>1</label>
        <note>in cluster B</note>
    </ligand>
</feature>
<feature type="binding site" evidence="1">
    <location>
        <position position="25"/>
    </location>
    <ligand>
        <name>a divalent metal cation</name>
        <dbReference type="ChEBI" id="CHEBI:60240"/>
        <label>1</label>
        <note>in cluster B</note>
    </ligand>
</feature>
<feature type="binding site" evidence="1">
    <location>
        <position position="25"/>
    </location>
    <ligand>
        <name>a divalent metal cation</name>
        <dbReference type="ChEBI" id="CHEBI:60240"/>
        <label>3</label>
        <note>in cluster B</note>
    </ligand>
</feature>
<feature type="binding site" evidence="1">
    <location>
        <position position="27"/>
    </location>
    <ligand>
        <name>a divalent metal cation</name>
        <dbReference type="ChEBI" id="CHEBI:60240"/>
        <label>2</label>
        <note>in cluster B</note>
    </ligand>
</feature>
<feature type="binding site" evidence="1">
    <location>
        <position position="30"/>
    </location>
    <ligand>
        <name>a divalent metal cation</name>
        <dbReference type="ChEBI" id="CHEBI:60240"/>
        <label>3</label>
        <note>in cluster B</note>
    </ligand>
</feature>
<feature type="binding site" evidence="1">
    <location>
        <position position="34"/>
    </location>
    <ligand>
        <name>a divalent metal cation</name>
        <dbReference type="ChEBI" id="CHEBI:60240"/>
        <label>4</label>
        <note>in cluster A</note>
    </ligand>
</feature>
<feature type="binding site" evidence="1">
    <location>
        <position position="35"/>
    </location>
    <ligand>
        <name>a divalent metal cation</name>
        <dbReference type="ChEBI" id="CHEBI:60240"/>
        <label>4</label>
        <note>in cluster A</note>
    </ligand>
</feature>
<feature type="binding site" evidence="1">
    <location>
        <position position="35"/>
    </location>
    <ligand>
        <name>a divalent metal cation</name>
        <dbReference type="ChEBI" id="CHEBI:60240"/>
        <label>5</label>
        <note>in cluster A</note>
    </ligand>
</feature>
<feature type="binding site" evidence="1">
    <location>
        <position position="37"/>
    </location>
    <ligand>
        <name>a divalent metal cation</name>
        <dbReference type="ChEBI" id="CHEBI:60240"/>
        <label>5</label>
        <note>in cluster A</note>
    </ligand>
</feature>
<feature type="binding site" evidence="1">
    <location>
        <position position="38"/>
    </location>
    <ligand>
        <name>a divalent metal cation</name>
        <dbReference type="ChEBI" id="CHEBI:60240"/>
        <label>5</label>
        <note>in cluster A</note>
    </ligand>
</feature>
<feature type="binding site" evidence="1">
    <location>
        <position position="38"/>
    </location>
    <ligand>
        <name>a divalent metal cation</name>
        <dbReference type="ChEBI" id="CHEBI:60240"/>
        <label>6</label>
        <note>in cluster A</note>
    </ligand>
</feature>
<feature type="binding site" evidence="1">
    <location>
        <position position="42"/>
    </location>
    <ligand>
        <name>a divalent metal cation</name>
        <dbReference type="ChEBI" id="CHEBI:60240"/>
        <label>6</label>
        <note>in cluster A</note>
    </ligand>
</feature>
<feature type="binding site" evidence="1">
    <location>
        <position position="45"/>
    </location>
    <ligand>
        <name>a divalent metal cation</name>
        <dbReference type="ChEBI" id="CHEBI:60240"/>
        <label>4</label>
        <note>in cluster A</note>
    </ligand>
</feature>
<feature type="binding site" evidence="1">
    <location>
        <position position="45"/>
    </location>
    <ligand>
        <name>a divalent metal cation</name>
        <dbReference type="ChEBI" id="CHEBI:60240"/>
        <label>6</label>
        <note>in cluster A</note>
    </ligand>
</feature>
<feature type="binding site" evidence="1">
    <location>
        <position position="49"/>
    </location>
    <ligand>
        <name>a divalent metal cation</name>
        <dbReference type="ChEBI" id="CHEBI:60240"/>
        <label>4</label>
        <note>in cluster A</note>
    </ligand>
</feature>
<feature type="binding site" evidence="1">
    <location>
        <position position="51"/>
    </location>
    <ligand>
        <name>a divalent metal cation</name>
        <dbReference type="ChEBI" id="CHEBI:60240"/>
        <label>5</label>
        <note>in cluster A</note>
    </ligand>
</feature>
<feature type="binding site" evidence="1">
    <location>
        <position position="51"/>
    </location>
    <ligand>
        <name>a divalent metal cation</name>
        <dbReference type="ChEBI" id="CHEBI:60240"/>
        <label>7</label>
        <note>in cluster A</note>
    </ligand>
</feature>
<feature type="binding site" evidence="1">
    <location>
        <position position="59"/>
    </location>
    <ligand>
        <name>a divalent metal cation</name>
        <dbReference type="ChEBI" id="CHEBI:60240"/>
        <label>7</label>
        <note>in cluster A</note>
    </ligand>
</feature>
<feature type="binding site" evidence="1">
    <location>
        <position position="61"/>
    </location>
    <ligand>
        <name>a divalent metal cation</name>
        <dbReference type="ChEBI" id="CHEBI:60240"/>
        <label>7</label>
        <note>in cluster A</note>
    </ligand>
</feature>
<feature type="binding site" evidence="1">
    <location>
        <position position="62"/>
    </location>
    <ligand>
        <name>a divalent metal cation</name>
        <dbReference type="ChEBI" id="CHEBI:60240"/>
        <label>6</label>
        <note>in cluster A</note>
    </ligand>
</feature>
<feature type="binding site" evidence="1">
    <location>
        <position position="62"/>
    </location>
    <ligand>
        <name>a divalent metal cation</name>
        <dbReference type="ChEBI" id="CHEBI:60240"/>
        <label>7</label>
        <note>in cluster A</note>
    </ligand>
</feature>
<keyword id="KW-0903">Direct protein sequencing</keyword>
<keyword id="KW-0479">Metal-binding</keyword>
<keyword id="KW-0480">Metal-thiolate cluster</keyword>
<keyword id="KW-0862">Zinc</keyword>
<reference key="1">
    <citation type="journal article" date="1990" name="Biochim. Biophys. Acta">
        <title>Primary sequence of duck metallothionein.</title>
        <authorList>
            <person name="Lin L.-Y."/>
            <person name="Liu L.-F."/>
            <person name="Tam M.F."/>
            <person name="Huang P.C."/>
            <person name="Vestling M."/>
            <person name="Fenselau C."/>
        </authorList>
    </citation>
    <scope>PROTEIN SEQUENCE</scope>
</reference>
<reference key="2">
    <citation type="journal article" date="1990" name="Biochem. Biophys. Res. Commun.">
        <title>Complete homology in metallothionein from two genera of ducks and their hybrids.</title>
        <authorList>
            <person name="Lin L.-Y."/>
            <person name="Huang P.C."/>
        </authorList>
    </citation>
    <scope>PROTEIN SEQUENCE</scope>
</reference>
<reference key="3">
    <citation type="journal article" date="1996" name="Gene">
        <title>Structure and expression of metallothionein gene in ducks.</title>
        <authorList>
            <person name="Lee Y.J."/>
            <person name="Chen Y.P."/>
            <person name="Wang S.H."/>
            <person name="Chow W.Y."/>
            <person name="Lin L.-Y."/>
        </authorList>
    </citation>
    <scope>NUCLEOTIDE SEQUENCE [MRNA]</scope>
    <source>
        <tissue>Liver</tissue>
    </source>
</reference>
<comment type="function">
    <text>Metallothioneins have a high content of cysteine residues that bind various heavy metals.</text>
</comment>
<comment type="domain">
    <text>Class I metallothioneins contain 2 metal-binding domains: four divalent ions are chelated within cluster A of the alpha domain and are coordinated via cysteinyl thiolate bridges to 11 cysteine ligands. Cluster B, the corresponding region within the beta domain, can ligate three divalent ions to 9 cysteines.</text>
</comment>
<comment type="similarity">
    <text evidence="2">Belongs to the metallothionein superfamily. Type 1 family.</text>
</comment>
<protein>
    <recommendedName>
        <fullName>Metallothionein</fullName>
        <shortName>MT</shortName>
    </recommendedName>
</protein>
<accession>P68494</accession>
<accession>P09576</accession>
<proteinExistence type="evidence at protein level"/>
<dbReference type="EMBL" id="U34231">
    <property type="protein sequence ID" value="AAC60048.1"/>
    <property type="molecule type" value="mRNA"/>
</dbReference>
<dbReference type="PIR" id="A34620">
    <property type="entry name" value="A34620"/>
</dbReference>
<dbReference type="SMR" id="P68494"/>
<dbReference type="Ensembl" id="ENSAPLT00020025977.1">
    <property type="protein sequence ID" value="ENSAPLP00020024080.1"/>
    <property type="gene ID" value="ENSAPLG00020016671.1"/>
</dbReference>
<dbReference type="OMA" id="KECKCSS"/>
<dbReference type="Proteomes" id="UP000694400">
    <property type="component" value="Chromosome 13"/>
</dbReference>
<dbReference type="GO" id="GO:0005737">
    <property type="term" value="C:cytoplasm"/>
    <property type="evidence" value="ECO:0007669"/>
    <property type="project" value="TreeGrafter"/>
</dbReference>
<dbReference type="GO" id="GO:0005634">
    <property type="term" value="C:nucleus"/>
    <property type="evidence" value="ECO:0007669"/>
    <property type="project" value="TreeGrafter"/>
</dbReference>
<dbReference type="GO" id="GO:0008270">
    <property type="term" value="F:zinc ion binding"/>
    <property type="evidence" value="ECO:0000250"/>
    <property type="project" value="AgBase"/>
</dbReference>
<dbReference type="GO" id="GO:0071276">
    <property type="term" value="P:cellular response to cadmium ion"/>
    <property type="evidence" value="ECO:0007669"/>
    <property type="project" value="TreeGrafter"/>
</dbReference>
<dbReference type="GO" id="GO:0071280">
    <property type="term" value="P:cellular response to copper ion"/>
    <property type="evidence" value="ECO:0007669"/>
    <property type="project" value="TreeGrafter"/>
</dbReference>
<dbReference type="GO" id="GO:0071294">
    <property type="term" value="P:cellular response to zinc ion"/>
    <property type="evidence" value="ECO:0007669"/>
    <property type="project" value="TreeGrafter"/>
</dbReference>
<dbReference type="GO" id="GO:0010273">
    <property type="term" value="P:detoxification of copper ion"/>
    <property type="evidence" value="ECO:0007669"/>
    <property type="project" value="TreeGrafter"/>
</dbReference>
<dbReference type="GO" id="GO:0006882">
    <property type="term" value="P:intracellular zinc ion homeostasis"/>
    <property type="evidence" value="ECO:0007669"/>
    <property type="project" value="TreeGrafter"/>
</dbReference>
<dbReference type="GO" id="GO:0032496">
    <property type="term" value="P:response to lipopolysaccharide"/>
    <property type="evidence" value="ECO:0000250"/>
    <property type="project" value="AgBase"/>
</dbReference>
<dbReference type="FunFam" id="4.10.10.10:FF:000001">
    <property type="entry name" value="Metallothionein"/>
    <property type="match status" value="1"/>
</dbReference>
<dbReference type="Gene3D" id="4.10.10.10">
    <property type="entry name" value="Metallothionein Isoform II"/>
    <property type="match status" value="1"/>
</dbReference>
<dbReference type="InterPro" id="IPR017854">
    <property type="entry name" value="Metalthion_dom_sf"/>
</dbReference>
<dbReference type="InterPro" id="IPR023587">
    <property type="entry name" value="Metalthion_dom_sf_vert"/>
</dbReference>
<dbReference type="InterPro" id="IPR000006">
    <property type="entry name" value="Metalthion_vert"/>
</dbReference>
<dbReference type="InterPro" id="IPR018064">
    <property type="entry name" value="Metalthion_vert_metal_BS"/>
</dbReference>
<dbReference type="PANTHER" id="PTHR23299">
    <property type="entry name" value="METALLOTHIONEIN"/>
    <property type="match status" value="1"/>
</dbReference>
<dbReference type="PANTHER" id="PTHR23299:SF24">
    <property type="entry name" value="METALLOTHIONEIN-1X"/>
    <property type="match status" value="1"/>
</dbReference>
<dbReference type="Pfam" id="PF00131">
    <property type="entry name" value="Metallothio"/>
    <property type="match status" value="1"/>
</dbReference>
<dbReference type="PRINTS" id="PR00860">
    <property type="entry name" value="MTVERTEBRATE"/>
</dbReference>
<dbReference type="SUPFAM" id="SSF57868">
    <property type="entry name" value="Metallothionein"/>
    <property type="match status" value="1"/>
</dbReference>
<dbReference type="PROSITE" id="PS00203">
    <property type="entry name" value="METALLOTHIONEIN_VRT"/>
    <property type="match status" value="1"/>
</dbReference>
<name>MT_ANAPL</name>
<organism>
    <name type="scientific">Anas platyrhynchos</name>
    <name type="common">Mallard</name>
    <name type="synonym">Anas boschas</name>
    <dbReference type="NCBI Taxonomy" id="8839"/>
    <lineage>
        <taxon>Eukaryota</taxon>
        <taxon>Metazoa</taxon>
        <taxon>Chordata</taxon>
        <taxon>Craniata</taxon>
        <taxon>Vertebrata</taxon>
        <taxon>Euteleostomi</taxon>
        <taxon>Archelosauria</taxon>
        <taxon>Archosauria</taxon>
        <taxon>Dinosauria</taxon>
        <taxon>Saurischia</taxon>
        <taxon>Theropoda</taxon>
        <taxon>Coelurosauria</taxon>
        <taxon>Aves</taxon>
        <taxon>Neognathae</taxon>
        <taxon>Galloanserae</taxon>
        <taxon>Anseriformes</taxon>
        <taxon>Anatidae</taxon>
        <taxon>Anatinae</taxon>
        <taxon>Anas</taxon>
    </lineage>
</organism>
<evidence type="ECO:0000250" key="1">
    <source>
        <dbReference type="UniProtKB" id="P02795"/>
    </source>
</evidence>
<evidence type="ECO:0000305" key="2"/>